<feature type="chain" id="PRO_1000071868" description="Lysine--tRNA ligase">
    <location>
        <begin position="1"/>
        <end position="498"/>
    </location>
</feature>
<feature type="binding site" evidence="1">
    <location>
        <position position="401"/>
    </location>
    <ligand>
        <name>Mg(2+)</name>
        <dbReference type="ChEBI" id="CHEBI:18420"/>
        <label>1</label>
    </ligand>
</feature>
<feature type="binding site" evidence="1">
    <location>
        <position position="408"/>
    </location>
    <ligand>
        <name>Mg(2+)</name>
        <dbReference type="ChEBI" id="CHEBI:18420"/>
        <label>1</label>
    </ligand>
</feature>
<feature type="binding site" evidence="1">
    <location>
        <position position="408"/>
    </location>
    <ligand>
        <name>Mg(2+)</name>
        <dbReference type="ChEBI" id="CHEBI:18420"/>
        <label>2</label>
    </ligand>
</feature>
<protein>
    <recommendedName>
        <fullName evidence="1">Lysine--tRNA ligase</fullName>
        <ecNumber evidence="1">6.1.1.6</ecNumber>
    </recommendedName>
    <alternativeName>
        <fullName evidence="1">Lysyl-tRNA synthetase</fullName>
        <shortName evidence="1">LysRS</shortName>
    </alternativeName>
</protein>
<name>SYK_DEHM1</name>
<sequence>MPEEYLNAQKMEKLERIKSRGINPYPATFHPSHTSVQAVALLAELEKQENPPKEILRIAGRIMTLRDMGKISFMDIRDGSGKIQVFCRQNDLDEASIELLKDLDLGDFIGAEGSLMRTRTGEPSLAATKISLLSKSLLPLPEKWHGLQDVEKRYRQRYLDLISNADARQTFLTRSQVISAIRSFMSSKGFLEVETPVLQPEAGGALARPFITHHQALDCDFYMRIALELHLKRLIVGGFDRVYEIGRIFRNEGVSTRHNPEFTMMESYQAYADYKDVMDFLEEMVSSVVKEISGGYTVPFGDTTLDFTPPWPRLSMRDAVKQYAGIDFFDFPTKEALAAEMIRRKLKVDPAKDWGKLVDELVGEFVEPRLIQPTFLTDHPVAMSPLAKQKPEDPRLTERFEAICANMEIANAFSELNDPVEQRARFKEQLEKRNQLRTEESESIDEDFLAALAYGMPPTGGLGVGIDRLVMLLTNHDSIREVILFPALKDREDKGEQE</sequence>
<dbReference type="EC" id="6.1.1.6" evidence="1"/>
<dbReference type="EMBL" id="CP000027">
    <property type="protein sequence ID" value="AAW40144.1"/>
    <property type="molecule type" value="Genomic_DNA"/>
</dbReference>
<dbReference type="RefSeq" id="WP_010936353.1">
    <property type="nucleotide sequence ID" value="NC_002936.3"/>
</dbReference>
<dbReference type="SMR" id="Q3Z8X9"/>
<dbReference type="FunCoup" id="Q3Z8X9">
    <property type="interactions" value="369"/>
</dbReference>
<dbReference type="STRING" id="243164.DET0578"/>
<dbReference type="GeneID" id="3230107"/>
<dbReference type="KEGG" id="det:DET0578"/>
<dbReference type="PATRIC" id="fig|243164.10.peg.555"/>
<dbReference type="eggNOG" id="COG1190">
    <property type="taxonomic scope" value="Bacteria"/>
</dbReference>
<dbReference type="HOGENOM" id="CLU_008255_6_0_0"/>
<dbReference type="InParanoid" id="Q3Z8X9"/>
<dbReference type="Proteomes" id="UP000008289">
    <property type="component" value="Chromosome"/>
</dbReference>
<dbReference type="GO" id="GO:0005829">
    <property type="term" value="C:cytosol"/>
    <property type="evidence" value="ECO:0007669"/>
    <property type="project" value="TreeGrafter"/>
</dbReference>
<dbReference type="GO" id="GO:0005524">
    <property type="term" value="F:ATP binding"/>
    <property type="evidence" value="ECO:0007669"/>
    <property type="project" value="UniProtKB-UniRule"/>
</dbReference>
<dbReference type="GO" id="GO:0004824">
    <property type="term" value="F:lysine-tRNA ligase activity"/>
    <property type="evidence" value="ECO:0007669"/>
    <property type="project" value="UniProtKB-UniRule"/>
</dbReference>
<dbReference type="GO" id="GO:0000287">
    <property type="term" value="F:magnesium ion binding"/>
    <property type="evidence" value="ECO:0007669"/>
    <property type="project" value="UniProtKB-UniRule"/>
</dbReference>
<dbReference type="GO" id="GO:0000049">
    <property type="term" value="F:tRNA binding"/>
    <property type="evidence" value="ECO:0007669"/>
    <property type="project" value="TreeGrafter"/>
</dbReference>
<dbReference type="GO" id="GO:0006430">
    <property type="term" value="P:lysyl-tRNA aminoacylation"/>
    <property type="evidence" value="ECO:0007669"/>
    <property type="project" value="UniProtKB-UniRule"/>
</dbReference>
<dbReference type="CDD" id="cd00775">
    <property type="entry name" value="LysRS_core"/>
    <property type="match status" value="1"/>
</dbReference>
<dbReference type="CDD" id="cd04322">
    <property type="entry name" value="LysRS_N"/>
    <property type="match status" value="1"/>
</dbReference>
<dbReference type="FunFam" id="2.40.50.140:FF:000024">
    <property type="entry name" value="Lysine--tRNA ligase"/>
    <property type="match status" value="1"/>
</dbReference>
<dbReference type="Gene3D" id="3.30.930.10">
    <property type="entry name" value="Bira Bifunctional Protein, Domain 2"/>
    <property type="match status" value="1"/>
</dbReference>
<dbReference type="Gene3D" id="2.40.50.140">
    <property type="entry name" value="Nucleic acid-binding proteins"/>
    <property type="match status" value="1"/>
</dbReference>
<dbReference type="HAMAP" id="MF_00252">
    <property type="entry name" value="Lys_tRNA_synth_class2"/>
    <property type="match status" value="1"/>
</dbReference>
<dbReference type="InterPro" id="IPR004364">
    <property type="entry name" value="Aa-tRNA-synt_II"/>
</dbReference>
<dbReference type="InterPro" id="IPR006195">
    <property type="entry name" value="aa-tRNA-synth_II"/>
</dbReference>
<dbReference type="InterPro" id="IPR045864">
    <property type="entry name" value="aa-tRNA-synth_II/BPL/LPL"/>
</dbReference>
<dbReference type="InterPro" id="IPR002313">
    <property type="entry name" value="Lys-tRNA-ligase_II"/>
</dbReference>
<dbReference type="InterPro" id="IPR044136">
    <property type="entry name" value="Lys-tRNA-ligase_II_N"/>
</dbReference>
<dbReference type="InterPro" id="IPR018149">
    <property type="entry name" value="Lys-tRNA-synth_II_C"/>
</dbReference>
<dbReference type="InterPro" id="IPR012340">
    <property type="entry name" value="NA-bd_OB-fold"/>
</dbReference>
<dbReference type="InterPro" id="IPR004365">
    <property type="entry name" value="NA-bd_OB_tRNA"/>
</dbReference>
<dbReference type="NCBIfam" id="TIGR00499">
    <property type="entry name" value="lysS_bact"/>
    <property type="match status" value="1"/>
</dbReference>
<dbReference type="NCBIfam" id="NF001756">
    <property type="entry name" value="PRK00484.1"/>
    <property type="match status" value="1"/>
</dbReference>
<dbReference type="PANTHER" id="PTHR42918:SF15">
    <property type="entry name" value="LYSINE--TRNA LIGASE, CHLOROPLASTIC_MITOCHONDRIAL"/>
    <property type="match status" value="1"/>
</dbReference>
<dbReference type="PANTHER" id="PTHR42918">
    <property type="entry name" value="LYSYL-TRNA SYNTHETASE"/>
    <property type="match status" value="1"/>
</dbReference>
<dbReference type="Pfam" id="PF00152">
    <property type="entry name" value="tRNA-synt_2"/>
    <property type="match status" value="1"/>
</dbReference>
<dbReference type="Pfam" id="PF01336">
    <property type="entry name" value="tRNA_anti-codon"/>
    <property type="match status" value="1"/>
</dbReference>
<dbReference type="PRINTS" id="PR00982">
    <property type="entry name" value="TRNASYNTHLYS"/>
</dbReference>
<dbReference type="SUPFAM" id="SSF55681">
    <property type="entry name" value="Class II aaRS and biotin synthetases"/>
    <property type="match status" value="1"/>
</dbReference>
<dbReference type="SUPFAM" id="SSF50249">
    <property type="entry name" value="Nucleic acid-binding proteins"/>
    <property type="match status" value="1"/>
</dbReference>
<dbReference type="PROSITE" id="PS50862">
    <property type="entry name" value="AA_TRNA_LIGASE_II"/>
    <property type="match status" value="1"/>
</dbReference>
<gene>
    <name evidence="1" type="primary">lysS</name>
    <name type="ordered locus">DET0578</name>
</gene>
<comment type="catalytic activity">
    <reaction evidence="1">
        <text>tRNA(Lys) + L-lysine + ATP = L-lysyl-tRNA(Lys) + AMP + diphosphate</text>
        <dbReference type="Rhea" id="RHEA:20792"/>
        <dbReference type="Rhea" id="RHEA-COMP:9696"/>
        <dbReference type="Rhea" id="RHEA-COMP:9697"/>
        <dbReference type="ChEBI" id="CHEBI:30616"/>
        <dbReference type="ChEBI" id="CHEBI:32551"/>
        <dbReference type="ChEBI" id="CHEBI:33019"/>
        <dbReference type="ChEBI" id="CHEBI:78442"/>
        <dbReference type="ChEBI" id="CHEBI:78529"/>
        <dbReference type="ChEBI" id="CHEBI:456215"/>
        <dbReference type="EC" id="6.1.1.6"/>
    </reaction>
</comment>
<comment type="cofactor">
    <cofactor evidence="1">
        <name>Mg(2+)</name>
        <dbReference type="ChEBI" id="CHEBI:18420"/>
    </cofactor>
    <text evidence="1">Binds 3 Mg(2+) ions per subunit.</text>
</comment>
<comment type="subunit">
    <text evidence="1">Homodimer.</text>
</comment>
<comment type="subcellular location">
    <subcellularLocation>
        <location evidence="1">Cytoplasm</location>
    </subcellularLocation>
</comment>
<comment type="similarity">
    <text evidence="1">Belongs to the class-II aminoacyl-tRNA synthetase family.</text>
</comment>
<accession>Q3Z8X9</accession>
<evidence type="ECO:0000255" key="1">
    <source>
        <dbReference type="HAMAP-Rule" id="MF_00252"/>
    </source>
</evidence>
<reference key="1">
    <citation type="journal article" date="2005" name="Science">
        <title>Genome sequence of the PCE-dechlorinating bacterium Dehalococcoides ethenogenes.</title>
        <authorList>
            <person name="Seshadri R."/>
            <person name="Adrian L."/>
            <person name="Fouts D.E."/>
            <person name="Eisen J.A."/>
            <person name="Phillippy A.M."/>
            <person name="Methe B.A."/>
            <person name="Ward N.L."/>
            <person name="Nelson W.C."/>
            <person name="DeBoy R.T."/>
            <person name="Khouri H.M."/>
            <person name="Kolonay J.F."/>
            <person name="Dodson R.J."/>
            <person name="Daugherty S.C."/>
            <person name="Brinkac L.M."/>
            <person name="Sullivan S.A."/>
            <person name="Madupu R."/>
            <person name="Nelson K.E."/>
            <person name="Kang K.H."/>
            <person name="Impraim M."/>
            <person name="Tran K."/>
            <person name="Robinson J.M."/>
            <person name="Forberger H.A."/>
            <person name="Fraser C.M."/>
            <person name="Zinder S.H."/>
            <person name="Heidelberg J.F."/>
        </authorList>
    </citation>
    <scope>NUCLEOTIDE SEQUENCE [LARGE SCALE GENOMIC DNA]</scope>
    <source>
        <strain>ATCC BAA-2266 / KCTC 15142 / 195</strain>
    </source>
</reference>
<keyword id="KW-0030">Aminoacyl-tRNA synthetase</keyword>
<keyword id="KW-0067">ATP-binding</keyword>
<keyword id="KW-0963">Cytoplasm</keyword>
<keyword id="KW-0436">Ligase</keyword>
<keyword id="KW-0460">Magnesium</keyword>
<keyword id="KW-0479">Metal-binding</keyword>
<keyword id="KW-0547">Nucleotide-binding</keyword>
<keyword id="KW-0648">Protein biosynthesis</keyword>
<proteinExistence type="inferred from homology"/>
<organism>
    <name type="scientific">Dehalococcoides mccartyi (strain ATCC BAA-2266 / KCTC 15142 / 195)</name>
    <name type="common">Dehalococcoides ethenogenes (strain 195)</name>
    <dbReference type="NCBI Taxonomy" id="243164"/>
    <lineage>
        <taxon>Bacteria</taxon>
        <taxon>Bacillati</taxon>
        <taxon>Chloroflexota</taxon>
        <taxon>Dehalococcoidia</taxon>
        <taxon>Dehalococcoidales</taxon>
        <taxon>Dehalococcoidaceae</taxon>
        <taxon>Dehalococcoides</taxon>
    </lineage>
</organism>